<organism>
    <name type="scientific">Escherichia coli O9:H4 (strain HS)</name>
    <dbReference type="NCBI Taxonomy" id="331112"/>
    <lineage>
        <taxon>Bacteria</taxon>
        <taxon>Pseudomonadati</taxon>
        <taxon>Pseudomonadota</taxon>
        <taxon>Gammaproteobacteria</taxon>
        <taxon>Enterobacterales</taxon>
        <taxon>Enterobacteriaceae</taxon>
        <taxon>Escherichia</taxon>
    </lineage>
</organism>
<evidence type="ECO:0000255" key="1">
    <source>
        <dbReference type="HAMAP-Rule" id="MF_01868"/>
    </source>
</evidence>
<name>AIS_ECOHS</name>
<feature type="signal peptide" evidence="1">
    <location>
        <begin position="1"/>
        <end position="25"/>
    </location>
</feature>
<feature type="chain" id="PRO_0000380572" description="Lipopolysaccharide core heptose(II)-phosphate phosphatase">
    <location>
        <begin position="26"/>
        <end position="200"/>
    </location>
</feature>
<comment type="function">
    <text evidence="1">Catalyzes the dephosphorylation of heptose(II) of the outer membrane lipopolysaccharide core.</text>
</comment>
<comment type="pathway">
    <text evidence="1">Bacterial outer membrane biogenesis; lipopolysaccharide metabolism.</text>
</comment>
<comment type="subcellular location">
    <subcellularLocation>
        <location evidence="1">Periplasm</location>
    </subcellularLocation>
</comment>
<comment type="similarity">
    <text evidence="1">Belongs to the phosphoglycerate mutase family. Ais subfamily.</text>
</comment>
<keyword id="KW-0378">Hydrolase</keyword>
<keyword id="KW-0574">Periplasm</keyword>
<keyword id="KW-0732">Signal</keyword>
<sequence>MLAFCRSSLKSKKYFIILLALAAIAGLGTHAAWSSNGLPRIDNKTLARLAQQHPVVVLFRHAERCDRSTNQCLSDITGITVKGTQDARELGNAFSADIPDFDLYSSNTVRTIQSATWFSAGKKLTVDKRFLQCGNDIYSAIKDLQSKAPDKNIVIFTHNHCLTYIAKDKRDATFKPDYLNGLVMHVEKGKVYLDGEFVNH</sequence>
<proteinExistence type="inferred from homology"/>
<gene>
    <name evidence="1" type="primary">ais</name>
    <name type="ordered locus">EcHS_A2397</name>
</gene>
<accession>A8A2B9</accession>
<dbReference type="EC" id="3.1.3.-" evidence="1"/>
<dbReference type="EMBL" id="CP000802">
    <property type="protein sequence ID" value="ABV06673.1"/>
    <property type="molecule type" value="Genomic_DNA"/>
</dbReference>
<dbReference type="RefSeq" id="WP_001742014.1">
    <property type="nucleotide sequence ID" value="NC_009800.1"/>
</dbReference>
<dbReference type="SMR" id="A8A2B9"/>
<dbReference type="KEGG" id="ecx:EcHS_A2397"/>
<dbReference type="HOGENOM" id="CLU_106705_1_0_6"/>
<dbReference type="UniPathway" id="UPA00451"/>
<dbReference type="GO" id="GO:0042597">
    <property type="term" value="C:periplasmic space"/>
    <property type="evidence" value="ECO:0007669"/>
    <property type="project" value="UniProtKB-SubCell"/>
</dbReference>
<dbReference type="GO" id="GO:0016791">
    <property type="term" value="F:phosphatase activity"/>
    <property type="evidence" value="ECO:0007669"/>
    <property type="project" value="UniProtKB-UniRule"/>
</dbReference>
<dbReference type="GO" id="GO:0008653">
    <property type="term" value="P:lipopolysaccharide metabolic process"/>
    <property type="evidence" value="ECO:0007669"/>
    <property type="project" value="UniProtKB-UniRule"/>
</dbReference>
<dbReference type="CDD" id="cd07040">
    <property type="entry name" value="HP"/>
    <property type="match status" value="1"/>
</dbReference>
<dbReference type="Gene3D" id="3.40.50.1240">
    <property type="entry name" value="Phosphoglycerate mutase-like"/>
    <property type="match status" value="1"/>
</dbReference>
<dbReference type="HAMAP" id="MF_01868">
    <property type="entry name" value="Ais"/>
    <property type="match status" value="1"/>
</dbReference>
<dbReference type="InterPro" id="IPR013078">
    <property type="entry name" value="His_Pase_superF_clade-1"/>
</dbReference>
<dbReference type="InterPro" id="IPR029033">
    <property type="entry name" value="His_PPase_superfam"/>
</dbReference>
<dbReference type="InterPro" id="IPR011310">
    <property type="entry name" value="LipoPS_heptP_Pase"/>
</dbReference>
<dbReference type="NCBIfam" id="NF011945">
    <property type="entry name" value="PRK15416.1"/>
    <property type="match status" value="1"/>
</dbReference>
<dbReference type="Pfam" id="PF00300">
    <property type="entry name" value="His_Phos_1"/>
    <property type="match status" value="1"/>
</dbReference>
<dbReference type="PIRSF" id="PIRSF011416">
    <property type="entry name" value="Ais-TraG-AfrS"/>
    <property type="match status" value="1"/>
</dbReference>
<dbReference type="SUPFAM" id="SSF53254">
    <property type="entry name" value="Phosphoglycerate mutase-like"/>
    <property type="match status" value="1"/>
</dbReference>
<reference key="1">
    <citation type="journal article" date="2008" name="J. Bacteriol.">
        <title>The pangenome structure of Escherichia coli: comparative genomic analysis of E. coli commensal and pathogenic isolates.</title>
        <authorList>
            <person name="Rasko D.A."/>
            <person name="Rosovitz M.J."/>
            <person name="Myers G.S.A."/>
            <person name="Mongodin E.F."/>
            <person name="Fricke W.F."/>
            <person name="Gajer P."/>
            <person name="Crabtree J."/>
            <person name="Sebaihia M."/>
            <person name="Thomson N.R."/>
            <person name="Chaudhuri R."/>
            <person name="Henderson I.R."/>
            <person name="Sperandio V."/>
            <person name="Ravel J."/>
        </authorList>
    </citation>
    <scope>NUCLEOTIDE SEQUENCE [LARGE SCALE GENOMIC DNA]</scope>
    <source>
        <strain>HS</strain>
    </source>
</reference>
<protein>
    <recommendedName>
        <fullName evidence="1">Lipopolysaccharide core heptose(II)-phosphate phosphatase</fullName>
        <ecNumber evidence="1">3.1.3.-</ecNumber>
    </recommendedName>
</protein>